<organism>
    <name type="scientific">Streptococcus pyogenes serotype M4 (strain MGAS10750)</name>
    <dbReference type="NCBI Taxonomy" id="370554"/>
    <lineage>
        <taxon>Bacteria</taxon>
        <taxon>Bacillati</taxon>
        <taxon>Bacillota</taxon>
        <taxon>Bacilli</taxon>
        <taxon>Lactobacillales</taxon>
        <taxon>Streptococcaceae</taxon>
        <taxon>Streptococcus</taxon>
    </lineage>
</organism>
<protein>
    <recommendedName>
        <fullName evidence="1">UPF0340 protein MGAS10750_Spy1669</fullName>
    </recommendedName>
</protein>
<dbReference type="EMBL" id="CP000262">
    <property type="protein sequence ID" value="ABF38619.1"/>
    <property type="molecule type" value="Genomic_DNA"/>
</dbReference>
<dbReference type="SMR" id="Q1J4W7"/>
<dbReference type="KEGG" id="spi:MGAS10750_Spy1669"/>
<dbReference type="HOGENOM" id="CLU_106658_0_0_9"/>
<dbReference type="Proteomes" id="UP000002434">
    <property type="component" value="Chromosome"/>
</dbReference>
<dbReference type="Gene3D" id="3.40.50.10360">
    <property type="entry name" value="Hypothetical protein TT1679"/>
    <property type="match status" value="1"/>
</dbReference>
<dbReference type="HAMAP" id="MF_00800">
    <property type="entry name" value="UPF0340"/>
    <property type="match status" value="1"/>
</dbReference>
<dbReference type="InterPro" id="IPR028345">
    <property type="entry name" value="Antibiotic_NAT-like"/>
</dbReference>
<dbReference type="InterPro" id="IPR006340">
    <property type="entry name" value="DUF436"/>
</dbReference>
<dbReference type="NCBIfam" id="TIGR01440">
    <property type="entry name" value="TIGR01440 family protein"/>
    <property type="match status" value="1"/>
</dbReference>
<dbReference type="Pfam" id="PF04260">
    <property type="entry name" value="DUF436"/>
    <property type="match status" value="1"/>
</dbReference>
<dbReference type="PIRSF" id="PIRSF007510">
    <property type="entry name" value="UCP007510"/>
    <property type="match status" value="1"/>
</dbReference>
<dbReference type="SUPFAM" id="SSF110710">
    <property type="entry name" value="TTHA0583/YokD-like"/>
    <property type="match status" value="1"/>
</dbReference>
<comment type="similarity">
    <text evidence="1">Belongs to the UPF0340 family.</text>
</comment>
<gene>
    <name type="ordered locus">MGAS10750_Spy1669</name>
</gene>
<reference key="1">
    <citation type="journal article" date="2006" name="Proc. Natl. Acad. Sci. U.S.A.">
        <title>Molecular genetic anatomy of inter- and intraserotype variation in the human bacterial pathogen group A Streptococcus.</title>
        <authorList>
            <person name="Beres S.B."/>
            <person name="Richter E.W."/>
            <person name="Nagiec M.J."/>
            <person name="Sumby P."/>
            <person name="Porcella S.F."/>
            <person name="DeLeo F.R."/>
            <person name="Musser J.M."/>
        </authorList>
    </citation>
    <scope>NUCLEOTIDE SEQUENCE [LARGE SCALE GENOMIC DNA]</scope>
    <source>
        <strain>MGAS10750</strain>
    </source>
</reference>
<evidence type="ECO:0000255" key="1">
    <source>
        <dbReference type="HAMAP-Rule" id="MF_00800"/>
    </source>
</evidence>
<proteinExistence type="inferred from homology"/>
<name>Y1669_STRPF</name>
<sequence>MLNNLEKQTREIVIDVVERSAIQPGNLFVLGLSSSEILGSRIGKQSSLEVGQIVVEVVLDELNKRGVHLAVQGCEHVNRALVVERHVAESKQLEIVNVVPNLHAGGSAQMAAFQLMSDPVEVEEVIAHAGLDIGDTAIGMHIKRVQIPLIPCQRELGGAHVTALASRPKLIGGARADYNMDIIRKS</sequence>
<accession>Q1J4W7</accession>
<feature type="chain" id="PRO_1000046985" description="UPF0340 protein MGAS10750_Spy1669">
    <location>
        <begin position="1"/>
        <end position="186"/>
    </location>
</feature>